<organism>
    <name type="scientific">Staphylococcus aureus (strain N315)</name>
    <dbReference type="NCBI Taxonomy" id="158879"/>
    <lineage>
        <taxon>Bacteria</taxon>
        <taxon>Bacillati</taxon>
        <taxon>Bacillota</taxon>
        <taxon>Bacilli</taxon>
        <taxon>Bacillales</taxon>
        <taxon>Staphylococcaceae</taxon>
        <taxon>Staphylococcus</taxon>
    </lineage>
</organism>
<comment type="function">
    <text evidence="1">Involved in protein export. Participates in an early event of protein translocation (By similarity).</text>
</comment>
<comment type="subcellular location">
    <subcellularLocation>
        <location evidence="1">Cell membrane</location>
        <topology evidence="1">Multi-pass membrane protein</topology>
    </subcellularLocation>
</comment>
<comment type="similarity">
    <text evidence="3">Belongs to the SecG family.</text>
</comment>
<name>SECG_STAAN</name>
<sequence length="77" mass="8399">MHTFLIVLLIIDCIALITVVLLQEGKSSGLSGAISGGAEQLFGKQKQRGVDLFLNRLTIILSILFFVLMICISYLGM</sequence>
<gene>
    <name type="primary">secG</name>
    <name type="ordered locus">SA0733</name>
</gene>
<reference key="1">
    <citation type="journal article" date="2001" name="Lancet">
        <title>Whole genome sequencing of meticillin-resistant Staphylococcus aureus.</title>
        <authorList>
            <person name="Kuroda M."/>
            <person name="Ohta T."/>
            <person name="Uchiyama I."/>
            <person name="Baba T."/>
            <person name="Yuzawa H."/>
            <person name="Kobayashi I."/>
            <person name="Cui L."/>
            <person name="Oguchi A."/>
            <person name="Aoki K."/>
            <person name="Nagai Y."/>
            <person name="Lian J.-Q."/>
            <person name="Ito T."/>
            <person name="Kanamori M."/>
            <person name="Matsumaru H."/>
            <person name="Maruyama A."/>
            <person name="Murakami H."/>
            <person name="Hosoyama A."/>
            <person name="Mizutani-Ui Y."/>
            <person name="Takahashi N.K."/>
            <person name="Sawano T."/>
            <person name="Inoue R."/>
            <person name="Kaito C."/>
            <person name="Sekimizu K."/>
            <person name="Hirakawa H."/>
            <person name="Kuhara S."/>
            <person name="Goto S."/>
            <person name="Yabuzaki J."/>
            <person name="Kanehisa M."/>
            <person name="Yamashita A."/>
            <person name="Oshima K."/>
            <person name="Furuya K."/>
            <person name="Yoshino C."/>
            <person name="Shiba T."/>
            <person name="Hattori M."/>
            <person name="Ogasawara N."/>
            <person name="Hayashi H."/>
            <person name="Hiramatsu K."/>
        </authorList>
    </citation>
    <scope>NUCLEOTIDE SEQUENCE [LARGE SCALE GENOMIC DNA]</scope>
    <source>
        <strain>N315</strain>
    </source>
</reference>
<dbReference type="EMBL" id="BA000018">
    <property type="protein sequence ID" value="BAB41966.1"/>
    <property type="molecule type" value="Genomic_DNA"/>
</dbReference>
<dbReference type="PIR" id="C89851">
    <property type="entry name" value="C89851"/>
</dbReference>
<dbReference type="RefSeq" id="WP_000556760.1">
    <property type="nucleotide sequence ID" value="NC_002745.2"/>
</dbReference>
<dbReference type="EnsemblBacteria" id="BAB41966">
    <property type="protein sequence ID" value="BAB41966"/>
    <property type="gene ID" value="BAB41966"/>
</dbReference>
<dbReference type="GeneID" id="98345127"/>
<dbReference type="KEGG" id="sau:SA0733"/>
<dbReference type="HOGENOM" id="CLU_094156_6_1_9"/>
<dbReference type="GO" id="GO:0005886">
    <property type="term" value="C:plasma membrane"/>
    <property type="evidence" value="ECO:0007669"/>
    <property type="project" value="UniProtKB-SubCell"/>
</dbReference>
<dbReference type="GO" id="GO:0015450">
    <property type="term" value="F:protein-transporting ATPase activity"/>
    <property type="evidence" value="ECO:0007669"/>
    <property type="project" value="InterPro"/>
</dbReference>
<dbReference type="GO" id="GO:0065002">
    <property type="term" value="P:intracellular protein transmembrane transport"/>
    <property type="evidence" value="ECO:0007669"/>
    <property type="project" value="TreeGrafter"/>
</dbReference>
<dbReference type="GO" id="GO:0009306">
    <property type="term" value="P:protein secretion"/>
    <property type="evidence" value="ECO:0007669"/>
    <property type="project" value="InterPro"/>
</dbReference>
<dbReference type="GO" id="GO:0043952">
    <property type="term" value="P:protein transport by the Sec complex"/>
    <property type="evidence" value="ECO:0007669"/>
    <property type="project" value="TreeGrafter"/>
</dbReference>
<dbReference type="InterPro" id="IPR004692">
    <property type="entry name" value="SecG"/>
</dbReference>
<dbReference type="NCBIfam" id="TIGR00810">
    <property type="entry name" value="secG"/>
    <property type="match status" value="1"/>
</dbReference>
<dbReference type="PANTHER" id="PTHR34182">
    <property type="entry name" value="PROTEIN-EXPORT MEMBRANE PROTEIN SECG"/>
    <property type="match status" value="1"/>
</dbReference>
<dbReference type="PANTHER" id="PTHR34182:SF1">
    <property type="entry name" value="PROTEIN-EXPORT MEMBRANE PROTEIN SECG"/>
    <property type="match status" value="1"/>
</dbReference>
<dbReference type="Pfam" id="PF03840">
    <property type="entry name" value="SecG"/>
    <property type="match status" value="1"/>
</dbReference>
<dbReference type="PRINTS" id="PR01651">
    <property type="entry name" value="SECGEXPORT"/>
</dbReference>
<protein>
    <recommendedName>
        <fullName>Probable protein-export membrane protein SecG</fullName>
    </recommendedName>
</protein>
<keyword id="KW-1003">Cell membrane</keyword>
<keyword id="KW-0472">Membrane</keyword>
<keyword id="KW-0653">Protein transport</keyword>
<keyword id="KW-0811">Translocation</keyword>
<keyword id="KW-0812">Transmembrane</keyword>
<keyword id="KW-1133">Transmembrane helix</keyword>
<keyword id="KW-0813">Transport</keyword>
<feature type="chain" id="PRO_0000157242" description="Probable protein-export membrane protein SecG">
    <location>
        <begin position="1"/>
        <end position="77"/>
    </location>
</feature>
<feature type="transmembrane region" description="Helical" evidence="2">
    <location>
        <begin position="2"/>
        <end position="22"/>
    </location>
</feature>
<feature type="transmembrane region" description="Helical" evidence="2">
    <location>
        <begin position="57"/>
        <end position="77"/>
    </location>
</feature>
<evidence type="ECO:0000250" key="1"/>
<evidence type="ECO:0000255" key="2"/>
<evidence type="ECO:0000305" key="3"/>
<accession>Q7A6Q1</accession>
<proteinExistence type="inferred from homology"/>